<proteinExistence type="inferred from homology"/>
<gene>
    <name evidence="1" type="primary">atpD</name>
    <name type="ordered locus">CKL_3688</name>
</gene>
<feature type="chain" id="PRO_0000339522" description="ATP synthase subunit beta">
    <location>
        <begin position="1"/>
        <end position="464"/>
    </location>
</feature>
<feature type="binding site" evidence="1">
    <location>
        <begin position="151"/>
        <end position="158"/>
    </location>
    <ligand>
        <name>ATP</name>
        <dbReference type="ChEBI" id="CHEBI:30616"/>
    </ligand>
</feature>
<dbReference type="EC" id="7.1.2.2" evidence="1"/>
<dbReference type="EMBL" id="CP000673">
    <property type="protein sequence ID" value="EDK35673.1"/>
    <property type="molecule type" value="Genomic_DNA"/>
</dbReference>
<dbReference type="SMR" id="A5N3H7"/>
<dbReference type="STRING" id="431943.CKL_3688"/>
<dbReference type="KEGG" id="ckl:CKL_3688"/>
<dbReference type="eggNOG" id="COG0055">
    <property type="taxonomic scope" value="Bacteria"/>
</dbReference>
<dbReference type="HOGENOM" id="CLU_022398_0_2_9"/>
<dbReference type="Proteomes" id="UP000002411">
    <property type="component" value="Chromosome"/>
</dbReference>
<dbReference type="GO" id="GO:0005886">
    <property type="term" value="C:plasma membrane"/>
    <property type="evidence" value="ECO:0007669"/>
    <property type="project" value="UniProtKB-SubCell"/>
</dbReference>
<dbReference type="GO" id="GO:0045259">
    <property type="term" value="C:proton-transporting ATP synthase complex"/>
    <property type="evidence" value="ECO:0007669"/>
    <property type="project" value="UniProtKB-KW"/>
</dbReference>
<dbReference type="GO" id="GO:0005524">
    <property type="term" value="F:ATP binding"/>
    <property type="evidence" value="ECO:0007669"/>
    <property type="project" value="UniProtKB-UniRule"/>
</dbReference>
<dbReference type="GO" id="GO:0016887">
    <property type="term" value="F:ATP hydrolysis activity"/>
    <property type="evidence" value="ECO:0007669"/>
    <property type="project" value="InterPro"/>
</dbReference>
<dbReference type="GO" id="GO:0046933">
    <property type="term" value="F:proton-transporting ATP synthase activity, rotational mechanism"/>
    <property type="evidence" value="ECO:0007669"/>
    <property type="project" value="UniProtKB-UniRule"/>
</dbReference>
<dbReference type="CDD" id="cd18110">
    <property type="entry name" value="ATP-synt_F1_beta_C"/>
    <property type="match status" value="1"/>
</dbReference>
<dbReference type="CDD" id="cd18115">
    <property type="entry name" value="ATP-synt_F1_beta_N"/>
    <property type="match status" value="1"/>
</dbReference>
<dbReference type="CDD" id="cd01133">
    <property type="entry name" value="F1-ATPase_beta_CD"/>
    <property type="match status" value="1"/>
</dbReference>
<dbReference type="FunFam" id="1.10.1140.10:FF:000001">
    <property type="entry name" value="ATP synthase subunit beta"/>
    <property type="match status" value="1"/>
</dbReference>
<dbReference type="FunFam" id="2.40.10.170:FF:000005">
    <property type="entry name" value="ATP synthase subunit beta"/>
    <property type="match status" value="1"/>
</dbReference>
<dbReference type="FunFam" id="3.40.50.300:FF:000026">
    <property type="entry name" value="ATP synthase subunit beta"/>
    <property type="match status" value="1"/>
</dbReference>
<dbReference type="Gene3D" id="2.40.10.170">
    <property type="match status" value="1"/>
</dbReference>
<dbReference type="Gene3D" id="1.10.1140.10">
    <property type="entry name" value="Bovine Mitochondrial F1-atpase, Atp Synthase Beta Chain, Chain D, domain 3"/>
    <property type="match status" value="1"/>
</dbReference>
<dbReference type="Gene3D" id="3.40.50.300">
    <property type="entry name" value="P-loop containing nucleotide triphosphate hydrolases"/>
    <property type="match status" value="1"/>
</dbReference>
<dbReference type="HAMAP" id="MF_01347">
    <property type="entry name" value="ATP_synth_beta_bact"/>
    <property type="match status" value="1"/>
</dbReference>
<dbReference type="InterPro" id="IPR003593">
    <property type="entry name" value="AAA+_ATPase"/>
</dbReference>
<dbReference type="InterPro" id="IPR055190">
    <property type="entry name" value="ATP-synt_VA_C"/>
</dbReference>
<dbReference type="InterPro" id="IPR005722">
    <property type="entry name" value="ATP_synth_F1_bsu"/>
</dbReference>
<dbReference type="InterPro" id="IPR020003">
    <property type="entry name" value="ATPase_a/bsu_AS"/>
</dbReference>
<dbReference type="InterPro" id="IPR050053">
    <property type="entry name" value="ATPase_alpha/beta_chains"/>
</dbReference>
<dbReference type="InterPro" id="IPR004100">
    <property type="entry name" value="ATPase_F1/V1/A1_a/bsu_N"/>
</dbReference>
<dbReference type="InterPro" id="IPR036121">
    <property type="entry name" value="ATPase_F1/V1/A1_a/bsu_N_sf"/>
</dbReference>
<dbReference type="InterPro" id="IPR000194">
    <property type="entry name" value="ATPase_F1/V1/A1_a/bsu_nucl-bd"/>
</dbReference>
<dbReference type="InterPro" id="IPR024034">
    <property type="entry name" value="ATPase_F1/V1_b/a_C"/>
</dbReference>
<dbReference type="InterPro" id="IPR027417">
    <property type="entry name" value="P-loop_NTPase"/>
</dbReference>
<dbReference type="NCBIfam" id="TIGR01039">
    <property type="entry name" value="atpD"/>
    <property type="match status" value="1"/>
</dbReference>
<dbReference type="PANTHER" id="PTHR15184">
    <property type="entry name" value="ATP SYNTHASE"/>
    <property type="match status" value="1"/>
</dbReference>
<dbReference type="PANTHER" id="PTHR15184:SF71">
    <property type="entry name" value="ATP SYNTHASE SUBUNIT BETA, MITOCHONDRIAL"/>
    <property type="match status" value="1"/>
</dbReference>
<dbReference type="Pfam" id="PF00006">
    <property type="entry name" value="ATP-synt_ab"/>
    <property type="match status" value="1"/>
</dbReference>
<dbReference type="Pfam" id="PF02874">
    <property type="entry name" value="ATP-synt_ab_N"/>
    <property type="match status" value="1"/>
</dbReference>
<dbReference type="Pfam" id="PF22919">
    <property type="entry name" value="ATP-synt_VA_C"/>
    <property type="match status" value="1"/>
</dbReference>
<dbReference type="SMART" id="SM00382">
    <property type="entry name" value="AAA"/>
    <property type="match status" value="1"/>
</dbReference>
<dbReference type="SUPFAM" id="SSF47917">
    <property type="entry name" value="C-terminal domain of alpha and beta subunits of F1 ATP synthase"/>
    <property type="match status" value="1"/>
</dbReference>
<dbReference type="SUPFAM" id="SSF50615">
    <property type="entry name" value="N-terminal domain of alpha and beta subunits of F1 ATP synthase"/>
    <property type="match status" value="1"/>
</dbReference>
<dbReference type="SUPFAM" id="SSF52540">
    <property type="entry name" value="P-loop containing nucleoside triphosphate hydrolases"/>
    <property type="match status" value="1"/>
</dbReference>
<dbReference type="PROSITE" id="PS00152">
    <property type="entry name" value="ATPASE_ALPHA_BETA"/>
    <property type="match status" value="1"/>
</dbReference>
<evidence type="ECO:0000255" key="1">
    <source>
        <dbReference type="HAMAP-Rule" id="MF_01347"/>
    </source>
</evidence>
<sequence>MSNIGKVVQVIGPVVDIKFDEENLPDIYNAISIESGNAKIITEVAQHLGDDIVRTISMESTDGLMRGMDALDIGAPISVPVGKPVLGRLFNMLGQPIDENGEVEADEYSPIHRPAPSFEDQSVKPEMFETGIKVIDLIAPYQKGGKIGLFGGAGVGKTVIIQELINNIAKEHGGLSVFTGVGERTREGNDLYYEMQESGVINKTALVFGQMNEPPGARMRVALTGLTMAEHFRDEGQDVLLFIDNIFRFTQAGSEVSALLGRIPSAVGYQPTLATEMGSLQERITSTKHGSITSVQAVYVPADDLTDPAPATTFTHLDATTVLSRSISEIGIYPAVDPLASTSRILDPRVVGEEHYKVASDVKHILERYSELQDIIAILGVDELSEEDRLVVIRARRIQRFLSQPFSVAEQFTGYEGKYVPIKETIRGFKEILEGKYDDLPETAFLFKGSIDEVIESAKNMVKS</sequence>
<reference key="1">
    <citation type="journal article" date="2008" name="Proc. Natl. Acad. Sci. U.S.A.">
        <title>The genome of Clostridium kluyveri, a strict anaerobe with unique metabolic features.</title>
        <authorList>
            <person name="Seedorf H."/>
            <person name="Fricke W.F."/>
            <person name="Veith B."/>
            <person name="Brueggemann H."/>
            <person name="Liesegang H."/>
            <person name="Strittmatter A."/>
            <person name="Miethke M."/>
            <person name="Buckel W."/>
            <person name="Hinderberger J."/>
            <person name="Li F."/>
            <person name="Hagemeier C."/>
            <person name="Thauer R.K."/>
            <person name="Gottschalk G."/>
        </authorList>
    </citation>
    <scope>NUCLEOTIDE SEQUENCE [LARGE SCALE GENOMIC DNA]</scope>
    <source>
        <strain>ATCC 8527 / DSM 555 / NBRC 12016 / NCIMB 10680 / K1</strain>
    </source>
</reference>
<comment type="function">
    <text evidence="1">Produces ATP from ADP in the presence of a proton gradient across the membrane. The catalytic sites are hosted primarily by the beta subunits.</text>
</comment>
<comment type="catalytic activity">
    <reaction evidence="1">
        <text>ATP + H2O + 4 H(+)(in) = ADP + phosphate + 5 H(+)(out)</text>
        <dbReference type="Rhea" id="RHEA:57720"/>
        <dbReference type="ChEBI" id="CHEBI:15377"/>
        <dbReference type="ChEBI" id="CHEBI:15378"/>
        <dbReference type="ChEBI" id="CHEBI:30616"/>
        <dbReference type="ChEBI" id="CHEBI:43474"/>
        <dbReference type="ChEBI" id="CHEBI:456216"/>
        <dbReference type="EC" id="7.1.2.2"/>
    </reaction>
</comment>
<comment type="subunit">
    <text evidence="1">F-type ATPases have 2 components, CF(1) - the catalytic core - and CF(0) - the membrane proton channel. CF(1) has five subunits: alpha(3), beta(3), gamma(1), delta(1), epsilon(1). CF(0) has three main subunits: a(1), b(2) and c(9-12). The alpha and beta chains form an alternating ring which encloses part of the gamma chain. CF(1) is attached to CF(0) by a central stalk formed by the gamma and epsilon chains, while a peripheral stalk is formed by the delta and b chains.</text>
</comment>
<comment type="subcellular location">
    <subcellularLocation>
        <location evidence="1">Cell membrane</location>
        <topology evidence="1">Peripheral membrane protein</topology>
    </subcellularLocation>
</comment>
<comment type="similarity">
    <text evidence="1">Belongs to the ATPase alpha/beta chains family.</text>
</comment>
<keyword id="KW-0066">ATP synthesis</keyword>
<keyword id="KW-0067">ATP-binding</keyword>
<keyword id="KW-1003">Cell membrane</keyword>
<keyword id="KW-0139">CF(1)</keyword>
<keyword id="KW-0375">Hydrogen ion transport</keyword>
<keyword id="KW-0406">Ion transport</keyword>
<keyword id="KW-0472">Membrane</keyword>
<keyword id="KW-0547">Nucleotide-binding</keyword>
<keyword id="KW-1185">Reference proteome</keyword>
<keyword id="KW-1278">Translocase</keyword>
<keyword id="KW-0813">Transport</keyword>
<organism>
    <name type="scientific">Clostridium kluyveri (strain ATCC 8527 / DSM 555 / NBRC 12016 / NCIMB 10680 / K1)</name>
    <dbReference type="NCBI Taxonomy" id="431943"/>
    <lineage>
        <taxon>Bacteria</taxon>
        <taxon>Bacillati</taxon>
        <taxon>Bacillota</taxon>
        <taxon>Clostridia</taxon>
        <taxon>Eubacteriales</taxon>
        <taxon>Clostridiaceae</taxon>
        <taxon>Clostridium</taxon>
    </lineage>
</organism>
<protein>
    <recommendedName>
        <fullName evidence="1">ATP synthase subunit beta</fullName>
        <ecNumber evidence="1">7.1.2.2</ecNumber>
    </recommendedName>
    <alternativeName>
        <fullName evidence="1">ATP synthase F1 sector subunit beta</fullName>
    </alternativeName>
    <alternativeName>
        <fullName evidence="1">F-ATPase subunit beta</fullName>
    </alternativeName>
</protein>
<name>ATPB_CLOK5</name>
<accession>A5N3H7</accession>